<reference key="1">
    <citation type="journal article" date="2006" name="Toxicon">
        <title>Characterization of venom components from the scorpion Androctonus crassicauda of Turkey: peptides and genes.</title>
        <authorList>
            <person name="Caliskan F."/>
            <person name="Garcia B.I."/>
            <person name="Coronas F.I.V."/>
            <person name="Batista C.V.F."/>
            <person name="Zamudio F.Z."/>
            <person name="Possani L.D."/>
        </authorList>
    </citation>
    <scope>NUCLEOTIDE SEQUENCE [MRNA]</scope>
    <source>
        <tissue>Venom gland</tissue>
    </source>
</reference>
<sequence length="72" mass="8151">ADVPGNYPLDTRGYSYYCTILGENEFCKKICKVHGVSYGYCYNSGCWCEYLEAKDVSVWNAAKNYCKNPVGK</sequence>
<proteinExistence type="evidence at transcript level"/>
<organism>
    <name type="scientific">Androctonus crassicauda</name>
    <name type="common">Arabian fat-tailed scorpion</name>
    <dbReference type="NCBI Taxonomy" id="122909"/>
    <lineage>
        <taxon>Eukaryota</taxon>
        <taxon>Metazoa</taxon>
        <taxon>Ecdysozoa</taxon>
        <taxon>Arthropoda</taxon>
        <taxon>Chelicerata</taxon>
        <taxon>Arachnida</taxon>
        <taxon>Scorpiones</taxon>
        <taxon>Buthida</taxon>
        <taxon>Buthoidea</taxon>
        <taxon>Buthidae</taxon>
        <taxon>Androctonus</taxon>
    </lineage>
</organism>
<protein>
    <recommendedName>
        <fullName>Toxin Acra II-3</fullName>
    </recommendedName>
</protein>
<accession>P0C297</accession>
<comment type="function">
    <text evidence="1">Binds to sodium channels (Nav) and affects the channel activation process.</text>
</comment>
<comment type="subcellular location">
    <subcellularLocation>
        <location evidence="1">Secreted</location>
    </subcellularLocation>
</comment>
<comment type="tissue specificity">
    <text>Expressed by the venom gland.</text>
</comment>
<comment type="domain">
    <text evidence="3">Has the structural arrangement of an alpha-helix connected to antiparallel beta-sheets by disulfide bonds (CS-alpha/beta).</text>
</comment>
<comment type="similarity">
    <text evidence="3">Belongs to the long (3 C-C) scorpion toxin superfamily. Sodium channel inhibitor family. Beta subfamily.</text>
</comment>
<evidence type="ECO:0000250" key="1"/>
<evidence type="ECO:0000255" key="2">
    <source>
        <dbReference type="PROSITE-ProRule" id="PRU01210"/>
    </source>
</evidence>
<evidence type="ECO:0000305" key="3"/>
<name>TX23_ANDCR</name>
<keyword id="KW-1015">Disulfide bond</keyword>
<keyword id="KW-0872">Ion channel impairing toxin</keyword>
<keyword id="KW-0528">Neurotoxin</keyword>
<keyword id="KW-0964">Secreted</keyword>
<keyword id="KW-0800">Toxin</keyword>
<keyword id="KW-0738">Voltage-gated sodium channel impairing toxin</keyword>
<feature type="chain" id="PRO_0000271324" description="Toxin Acra II-3">
    <location>
        <begin position="1"/>
        <end position="72"/>
    </location>
</feature>
<feature type="domain" description="LCN-type CS-alpha/beta" evidence="2">
    <location>
        <begin position="4"/>
        <end position="67"/>
    </location>
</feature>
<feature type="disulfide bond" evidence="2">
    <location>
        <begin position="18"/>
        <end position="41"/>
    </location>
</feature>
<feature type="disulfide bond" evidence="2">
    <location>
        <begin position="27"/>
        <end position="46"/>
    </location>
</feature>
<feature type="disulfide bond" evidence="2">
    <location>
        <begin position="31"/>
        <end position="48"/>
    </location>
</feature>
<dbReference type="SMR" id="P0C297"/>
<dbReference type="GO" id="GO:0005576">
    <property type="term" value="C:extracellular region"/>
    <property type="evidence" value="ECO:0007669"/>
    <property type="project" value="UniProtKB-SubCell"/>
</dbReference>
<dbReference type="GO" id="GO:0019871">
    <property type="term" value="F:sodium channel inhibitor activity"/>
    <property type="evidence" value="ECO:0007669"/>
    <property type="project" value="InterPro"/>
</dbReference>
<dbReference type="GO" id="GO:0090729">
    <property type="term" value="F:toxin activity"/>
    <property type="evidence" value="ECO:0007669"/>
    <property type="project" value="UniProtKB-KW"/>
</dbReference>
<dbReference type="CDD" id="cd23106">
    <property type="entry name" value="neurotoxins_LC_scorpion"/>
    <property type="match status" value="1"/>
</dbReference>
<dbReference type="Gene3D" id="3.30.30.10">
    <property type="entry name" value="Knottin, scorpion toxin-like"/>
    <property type="match status" value="1"/>
</dbReference>
<dbReference type="InterPro" id="IPR044062">
    <property type="entry name" value="LCN-type_CS_alpha_beta_dom"/>
</dbReference>
<dbReference type="InterPro" id="IPR036574">
    <property type="entry name" value="Scorpion_toxin-like_sf"/>
</dbReference>
<dbReference type="InterPro" id="IPR002061">
    <property type="entry name" value="Scorpion_toxinL/defensin"/>
</dbReference>
<dbReference type="Pfam" id="PF00537">
    <property type="entry name" value="Toxin_3"/>
    <property type="match status" value="1"/>
</dbReference>
<dbReference type="SUPFAM" id="SSF57095">
    <property type="entry name" value="Scorpion toxin-like"/>
    <property type="match status" value="1"/>
</dbReference>
<dbReference type="PROSITE" id="PS51863">
    <property type="entry name" value="LCN_CSAB"/>
    <property type="match status" value="1"/>
</dbReference>